<organism>
    <name type="scientific">Homo sapiens</name>
    <name type="common">Human</name>
    <dbReference type="NCBI Taxonomy" id="9606"/>
    <lineage>
        <taxon>Eukaryota</taxon>
        <taxon>Metazoa</taxon>
        <taxon>Chordata</taxon>
        <taxon>Craniata</taxon>
        <taxon>Vertebrata</taxon>
        <taxon>Euteleostomi</taxon>
        <taxon>Mammalia</taxon>
        <taxon>Eutheria</taxon>
        <taxon>Euarchontoglires</taxon>
        <taxon>Primates</taxon>
        <taxon>Haplorrhini</taxon>
        <taxon>Catarrhini</taxon>
        <taxon>Hominidae</taxon>
        <taxon>Homo</taxon>
    </lineage>
</organism>
<gene>
    <name evidence="4" type="primary">SMIM36</name>
</gene>
<proteinExistence type="evidence at protein level"/>
<evidence type="ECO:0000255" key="1"/>
<evidence type="ECO:0000256" key="2">
    <source>
        <dbReference type="SAM" id="MobiDB-lite"/>
    </source>
</evidence>
<evidence type="ECO:0000305" key="3"/>
<evidence type="ECO:0000312" key="4">
    <source>
        <dbReference type="HGNC" id="HGNC:53654"/>
    </source>
</evidence>
<accession>A0A1B0GVT2</accession>
<sequence length="93" mass="10135">MEFYLEIDPVTLNLIILVASYVILLLVFLISCVLYDCRGKDPSKEYAPEATLEAQPSIRLVVMHPSVAGPHWPKGPGLSLGDPAPLGKKSTMV</sequence>
<dbReference type="EMBL" id="AC006269">
    <property type="status" value="NOT_ANNOTATED_CDS"/>
    <property type="molecule type" value="Genomic_DNA"/>
</dbReference>
<dbReference type="CCDS" id="CCDS92361.1"/>
<dbReference type="RefSeq" id="NP_001382350.1">
    <property type="nucleotide sequence ID" value="NM_001395421.2"/>
</dbReference>
<dbReference type="SMR" id="A0A1B0GVT2"/>
<dbReference type="STRING" id="9606.ENSP00000490644"/>
<dbReference type="BioMuta" id="ENSG00000261873"/>
<dbReference type="MassIVE" id="A0A1B0GVT2"/>
<dbReference type="PeptideAtlas" id="A0A1B0GVT2"/>
<dbReference type="Ensembl" id="ENST00000636752.2">
    <property type="protein sequence ID" value="ENSP00000490644.1"/>
    <property type="gene ID" value="ENSG00000261873.3"/>
</dbReference>
<dbReference type="GeneID" id="101927367"/>
<dbReference type="MANE-Select" id="ENST00000636752.2">
    <property type="protein sequence ID" value="ENSP00000490644.1"/>
    <property type="RefSeq nucleotide sequence ID" value="NM_001395421.2"/>
    <property type="RefSeq protein sequence ID" value="NP_001382350.1"/>
</dbReference>
<dbReference type="AGR" id="HGNC:53654"/>
<dbReference type="GeneCards" id="SMIM36"/>
<dbReference type="HGNC" id="HGNC:53654">
    <property type="gene designation" value="SMIM36"/>
</dbReference>
<dbReference type="HPA" id="ENSG00000261873">
    <property type="expression patterns" value="Group enriched (retina, testis)"/>
</dbReference>
<dbReference type="neXtProt" id="NX_A0A1B0GVT2"/>
<dbReference type="VEuPathDB" id="HostDB:ENSG00000261873"/>
<dbReference type="GeneTree" id="ENSGT00980000198588"/>
<dbReference type="InParanoid" id="A0A1B0GVT2"/>
<dbReference type="OMA" id="HLVVMQQ"/>
<dbReference type="OrthoDB" id="8741798at2759"/>
<dbReference type="PAN-GO" id="A0A1B0GVT2">
    <property type="GO annotations" value="0 GO annotations based on evolutionary models"/>
</dbReference>
<dbReference type="ChiTaRS" id="SMIM36">
    <property type="organism name" value="human"/>
</dbReference>
<dbReference type="Pharos" id="A0A1B0GVT2">
    <property type="development level" value="Tdark"/>
</dbReference>
<dbReference type="PRO" id="PR:A0A1B0GVT2"/>
<dbReference type="Proteomes" id="UP000005640">
    <property type="component" value="Chromosome 17"/>
</dbReference>
<dbReference type="RNAct" id="A0A1B0GVT2">
    <property type="molecule type" value="protein"/>
</dbReference>
<dbReference type="Bgee" id="ENSG00000261873">
    <property type="expression patterns" value="Expressed in right testis and 60 other cell types or tissues"/>
</dbReference>
<dbReference type="GO" id="GO:0016020">
    <property type="term" value="C:membrane"/>
    <property type="evidence" value="ECO:0007669"/>
    <property type="project" value="UniProtKB-SubCell"/>
</dbReference>
<reference key="1">
    <citation type="journal article" date="2006" name="Nature">
        <title>DNA sequence of human chromosome 17 and analysis of rearrangement in the human lineage.</title>
        <authorList>
            <person name="Zody M.C."/>
            <person name="Garber M."/>
            <person name="Adams D.J."/>
            <person name="Sharpe T."/>
            <person name="Harrow J."/>
            <person name="Lupski J.R."/>
            <person name="Nicholson C."/>
            <person name="Searle S.M."/>
            <person name="Wilming L."/>
            <person name="Young S.K."/>
            <person name="Abouelleil A."/>
            <person name="Allen N.R."/>
            <person name="Bi W."/>
            <person name="Bloom T."/>
            <person name="Borowsky M.L."/>
            <person name="Bugalter B.E."/>
            <person name="Butler J."/>
            <person name="Chang J.L."/>
            <person name="Chen C.-K."/>
            <person name="Cook A."/>
            <person name="Corum B."/>
            <person name="Cuomo C.A."/>
            <person name="de Jong P.J."/>
            <person name="DeCaprio D."/>
            <person name="Dewar K."/>
            <person name="FitzGerald M."/>
            <person name="Gilbert J."/>
            <person name="Gibson R."/>
            <person name="Gnerre S."/>
            <person name="Goldstein S."/>
            <person name="Grafham D.V."/>
            <person name="Grocock R."/>
            <person name="Hafez N."/>
            <person name="Hagopian D.S."/>
            <person name="Hart E."/>
            <person name="Norman C.H."/>
            <person name="Humphray S."/>
            <person name="Jaffe D.B."/>
            <person name="Jones M."/>
            <person name="Kamal M."/>
            <person name="Khodiyar V.K."/>
            <person name="LaButti K."/>
            <person name="Laird G."/>
            <person name="Lehoczky J."/>
            <person name="Liu X."/>
            <person name="Lokyitsang T."/>
            <person name="Loveland J."/>
            <person name="Lui A."/>
            <person name="Macdonald P."/>
            <person name="Major J.E."/>
            <person name="Matthews L."/>
            <person name="Mauceli E."/>
            <person name="McCarroll S.A."/>
            <person name="Mihalev A.H."/>
            <person name="Mudge J."/>
            <person name="Nguyen C."/>
            <person name="Nicol R."/>
            <person name="O'Leary S.B."/>
            <person name="Osoegawa K."/>
            <person name="Schwartz D.C."/>
            <person name="Shaw-Smith C."/>
            <person name="Stankiewicz P."/>
            <person name="Steward C."/>
            <person name="Swarbreck D."/>
            <person name="Venkataraman V."/>
            <person name="Whittaker C.A."/>
            <person name="Yang X."/>
            <person name="Zimmer A.R."/>
            <person name="Bradley A."/>
            <person name="Hubbard T."/>
            <person name="Birren B.W."/>
            <person name="Rogers J."/>
            <person name="Lander E.S."/>
            <person name="Nusbaum C."/>
        </authorList>
    </citation>
    <scope>NUCLEOTIDE SEQUENCE [LARGE SCALE GENOMIC DNA]</scope>
</reference>
<protein>
    <recommendedName>
        <fullName evidence="3">Small integral membrane protein 36</fullName>
    </recommendedName>
</protein>
<feature type="chain" id="PRO_0000443403" description="Small integral membrane protein 36">
    <location>
        <begin position="1"/>
        <end position="93"/>
    </location>
</feature>
<feature type="transmembrane region" description="Helical" evidence="1">
    <location>
        <begin position="14"/>
        <end position="34"/>
    </location>
</feature>
<feature type="region of interest" description="Disordered" evidence="2">
    <location>
        <begin position="73"/>
        <end position="93"/>
    </location>
</feature>
<keyword id="KW-0472">Membrane</keyword>
<keyword id="KW-1267">Proteomics identification</keyword>
<keyword id="KW-1185">Reference proteome</keyword>
<keyword id="KW-0812">Transmembrane</keyword>
<keyword id="KW-1133">Transmembrane helix</keyword>
<comment type="subcellular location">
    <subcellularLocation>
        <location evidence="1">Membrane</location>
        <topology evidence="1">Single-pass membrane protein</topology>
    </subcellularLocation>
</comment>
<name>SIM36_HUMAN</name>